<feature type="chain" id="PRO_0000417046" description="AP-5 complex subunit beta-1">
    <location>
        <begin position="1"/>
        <end position="877"/>
    </location>
</feature>
<gene>
    <name type="primary">AP5B1</name>
</gene>
<protein>
    <recommendedName>
        <fullName>AP-5 complex subunit beta-1</fullName>
    </recommendedName>
    <alternativeName>
        <fullName>Adaptor-related protein complex 5 beta subunit</fullName>
        <shortName>Beta5</shortName>
    </alternativeName>
</protein>
<dbReference type="EMBL" id="DAAA02063571">
    <property type="status" value="NOT_ANNOTATED_CDS"/>
    <property type="molecule type" value="Genomic_DNA"/>
</dbReference>
<dbReference type="EMBL" id="BT021840">
    <property type="protein sequence ID" value="AAX46687.1"/>
    <property type="status" value="ALT_INIT"/>
    <property type="molecule type" value="mRNA"/>
</dbReference>
<dbReference type="EMBL" id="BT026187">
    <property type="protein sequence ID" value="ABG67026.1"/>
    <property type="molecule type" value="mRNA"/>
</dbReference>
<dbReference type="RefSeq" id="XP_005227091.1">
    <property type="nucleotide sequence ID" value="XM_005227034.5"/>
</dbReference>
<dbReference type="RefSeq" id="XP_015316742.1">
    <property type="nucleotide sequence ID" value="XM_015461256.1"/>
</dbReference>
<dbReference type="FunCoup" id="G3MZC5">
    <property type="interactions" value="699"/>
</dbReference>
<dbReference type="STRING" id="9913.ENSBTAP00000054921"/>
<dbReference type="PaxDb" id="9913-ENSBTAP00000054921"/>
<dbReference type="Ensembl" id="ENSBTAT00000064301.3">
    <property type="protein sequence ID" value="ENSBTAP00000054921.1"/>
    <property type="gene ID" value="ENSBTAG00000046875.3"/>
</dbReference>
<dbReference type="GeneID" id="509087"/>
<dbReference type="KEGG" id="bta:509087"/>
<dbReference type="CTD" id="91056"/>
<dbReference type="VEuPathDB" id="HostDB:ENSBTAG00000046875"/>
<dbReference type="VGNC" id="VGNC:25995">
    <property type="gene designation" value="AP5B1"/>
</dbReference>
<dbReference type="eggNOG" id="ENOG502QVTX">
    <property type="taxonomic scope" value="Eukaryota"/>
</dbReference>
<dbReference type="GeneTree" id="ENSGT00530000064721"/>
<dbReference type="HOGENOM" id="CLU_014176_0_0_1"/>
<dbReference type="InParanoid" id="G3MZC5"/>
<dbReference type="OMA" id="SHHLEPF"/>
<dbReference type="OrthoDB" id="646197at2759"/>
<dbReference type="TreeFam" id="TF332158"/>
<dbReference type="Proteomes" id="UP000009136">
    <property type="component" value="Chromosome 29"/>
</dbReference>
<dbReference type="Bgee" id="ENSBTAG00000046875">
    <property type="expression patterns" value="Expressed in neutrophil and 102 other cell types or tissues"/>
</dbReference>
<dbReference type="GO" id="GO:0030119">
    <property type="term" value="C:AP-type membrane coat adaptor complex"/>
    <property type="evidence" value="ECO:0000250"/>
    <property type="project" value="UniProtKB"/>
</dbReference>
<dbReference type="GO" id="GO:0016197">
    <property type="term" value="P:endosomal transport"/>
    <property type="evidence" value="ECO:0000250"/>
    <property type="project" value="UniProtKB"/>
</dbReference>
<dbReference type="GO" id="GO:0015031">
    <property type="term" value="P:protein transport"/>
    <property type="evidence" value="ECO:0007669"/>
    <property type="project" value="UniProtKB-KW"/>
</dbReference>
<dbReference type="InterPro" id="IPR038741">
    <property type="entry name" value="AP5B1"/>
</dbReference>
<dbReference type="InterPro" id="IPR048980">
    <property type="entry name" value="AP5B1_barrel"/>
</dbReference>
<dbReference type="InterPro" id="IPR048981">
    <property type="entry name" value="AP5B1_C"/>
</dbReference>
<dbReference type="InterPro" id="IPR048979">
    <property type="entry name" value="AP5B1_middle"/>
</dbReference>
<dbReference type="InterPro" id="IPR048978">
    <property type="entry name" value="AP5B1_N"/>
</dbReference>
<dbReference type="PANTHER" id="PTHR34033">
    <property type="entry name" value="AP-5 COMPLEX SUBUNIT BETA-1"/>
    <property type="match status" value="1"/>
</dbReference>
<dbReference type="PANTHER" id="PTHR34033:SF1">
    <property type="entry name" value="AP-5 COMPLEX SUBUNIT BETA-1"/>
    <property type="match status" value="1"/>
</dbReference>
<dbReference type="Pfam" id="PF21589">
    <property type="entry name" value="AP5B1_barrel"/>
    <property type="match status" value="1"/>
</dbReference>
<dbReference type="Pfam" id="PF21590">
    <property type="entry name" value="AP5B1_C"/>
    <property type="match status" value="1"/>
</dbReference>
<dbReference type="Pfam" id="PF21588">
    <property type="entry name" value="AP5B1_middle"/>
    <property type="match status" value="1"/>
</dbReference>
<dbReference type="Pfam" id="PF21587">
    <property type="entry name" value="AP5B1_N"/>
    <property type="match status" value="1"/>
</dbReference>
<name>AP5B1_BOVIN</name>
<keyword id="KW-0653">Protein transport</keyword>
<keyword id="KW-1185">Reference proteome</keyword>
<keyword id="KW-0813">Transport</keyword>
<sequence>MGPLGRETWAQRLGTFRASPSAFMAGPEGEDLGRDLLSDLRSEKLSEPMKVALLALSLEYPDQLWPDAPAAEAAATSLLDTLVLLPPRPSALRRPLLLAATTALAAGGALNPASGASGRLLPLLLGLASGRDLGRSFCPASEQRPLQATAWECLRELESCRPGLLGGCLGLLRALLGREGPAQPLSLLLALALRNALVIQARAGAGLQGLLTAGESSMEGGPWNWMLAEEGEVHLQPQAPSWPAAEEDECGLAALELSPEEARELRATVAQLLDASYLLTPVAQAQLLWLLGWALRGLRGQPPVLFKPQLVRLLGTAQLTLLHAMLALKAAFGEALFTAQDEALLLRRLTLAAQHPALPLPTHLFYLHCLLNFPENWPLGPTGEEAAPLLLGSQLCRGLLPSLLHEPMALLARLHLLCLLCVEDEEKEGKGQDRSPRHYLEELLAGLRQRAALDGGPRALATLCFQASYLVAHCLAGQPVVLIPLTQGLAQLYRARPALAPHFVDLLDHVGPELQEPLRVALRQEVASRPGREEALRWHLQMLASVADGDAQSATLSFLRAAAAHCTDWGLQQALLRVCRALLRAGVGGGLADLLQELARQLEDPDGQDHARLYYILLAHLAGPKLGVALGPSLAAPALASSLVAENQGFAAALMVQEAPAPIRLSVGPRRAEGAVPVLRLQVEVLEPVYSLELRFRVEGQLYAPLGAVHVPCLCPGRPTRPLLLPLQPRRPAPARLAVRALYSTPSGLTCHAHLPPLLVAFADLFLPFPQPPEGAQLDFFEELWDSCLPKGTESRLWCPLGPEGLEALVSRHLEPFVVVAQPPVSYLVAIRLPPDSRLLLRLEAAQADGVPVALRTDDWAVLPLAGDYLRGLSAAG</sequence>
<proteinExistence type="evidence at transcript level"/>
<organism>
    <name type="scientific">Bos taurus</name>
    <name type="common">Bovine</name>
    <dbReference type="NCBI Taxonomy" id="9913"/>
    <lineage>
        <taxon>Eukaryota</taxon>
        <taxon>Metazoa</taxon>
        <taxon>Chordata</taxon>
        <taxon>Craniata</taxon>
        <taxon>Vertebrata</taxon>
        <taxon>Euteleostomi</taxon>
        <taxon>Mammalia</taxon>
        <taxon>Eutheria</taxon>
        <taxon>Laurasiatheria</taxon>
        <taxon>Artiodactyla</taxon>
        <taxon>Ruminantia</taxon>
        <taxon>Pecora</taxon>
        <taxon>Bovidae</taxon>
        <taxon>Bovinae</taxon>
        <taxon>Bos</taxon>
    </lineage>
</organism>
<accession>G3MZC5</accession>
<accession>Q0V8N1</accession>
<accession>Q58CV7</accession>
<reference key="1">
    <citation type="journal article" date="2009" name="Genome Biol.">
        <title>A whole-genome assembly of the domestic cow, Bos taurus.</title>
        <authorList>
            <person name="Zimin A.V."/>
            <person name="Delcher A.L."/>
            <person name="Florea L."/>
            <person name="Kelley D.R."/>
            <person name="Schatz M.C."/>
            <person name="Puiu D."/>
            <person name="Hanrahan F."/>
            <person name="Pertea G."/>
            <person name="Van Tassell C.P."/>
            <person name="Sonstegard T.S."/>
            <person name="Marcais G."/>
            <person name="Roberts M."/>
            <person name="Subramanian P."/>
            <person name="Yorke J.A."/>
            <person name="Salzberg S.L."/>
        </authorList>
    </citation>
    <scope>NUCLEOTIDE SEQUENCE [LARGE SCALE GENOMIC DNA]</scope>
    <source>
        <strain>Hereford</strain>
    </source>
</reference>
<reference key="2">
    <citation type="journal article" date="2005" name="BMC Genomics">
        <title>Characterization of 954 bovine full-CDS cDNA sequences.</title>
        <authorList>
            <person name="Harhay G.P."/>
            <person name="Sonstegard T.S."/>
            <person name="Keele J.W."/>
            <person name="Heaton M.P."/>
            <person name="Clawson M.L."/>
            <person name="Snelling W.M."/>
            <person name="Wiedmann R.T."/>
            <person name="Van Tassell C.P."/>
            <person name="Smith T.P.L."/>
        </authorList>
    </citation>
    <scope>NUCLEOTIDE SEQUENCE [LARGE SCALE MRNA] OF 315-877</scope>
</reference>
<comment type="function">
    <text evidence="1">As part of AP-5, a probable fifth adaptor protein complex, it may be involved in endosomal transport.</text>
</comment>
<comment type="subunit">
    <text evidence="1">Probably part of the adaptor protein complex 5 (AP-5), a tetramer composed of AP5B1, AP5M1, AP5S1 and AP5Z1. Interacts with ZFYVE26 and SPG11 (By similarity).</text>
</comment>
<comment type="sequence caution" evidence="2">
    <conflict type="erroneous initiation">
        <sequence resource="EMBL-CDS" id="AAX46687"/>
    </conflict>
    <text>Truncated N-terminus.</text>
</comment>
<evidence type="ECO:0000250" key="1"/>
<evidence type="ECO:0000305" key="2"/>